<gene>
    <name evidence="1" type="primary">ndhC</name>
    <name type="ordered locus">LopeCp043</name>
</gene>
<comment type="function">
    <text evidence="1">NDH shuttles electrons from NAD(P)H:plastoquinone, via FMN and iron-sulfur (Fe-S) centers, to quinones in the photosynthetic chain and possibly in a chloroplast respiratory chain. The immediate electron acceptor for the enzyme in this species is believed to be plastoquinone. Couples the redox reaction to proton translocation, and thus conserves the redox energy in a proton gradient.</text>
</comment>
<comment type="catalytic activity">
    <reaction evidence="1">
        <text>a plastoquinone + NADH + (n+1) H(+)(in) = a plastoquinol + NAD(+) + n H(+)(out)</text>
        <dbReference type="Rhea" id="RHEA:42608"/>
        <dbReference type="Rhea" id="RHEA-COMP:9561"/>
        <dbReference type="Rhea" id="RHEA-COMP:9562"/>
        <dbReference type="ChEBI" id="CHEBI:15378"/>
        <dbReference type="ChEBI" id="CHEBI:17757"/>
        <dbReference type="ChEBI" id="CHEBI:57540"/>
        <dbReference type="ChEBI" id="CHEBI:57945"/>
        <dbReference type="ChEBI" id="CHEBI:62192"/>
    </reaction>
</comment>
<comment type="catalytic activity">
    <reaction evidence="1">
        <text>a plastoquinone + NADPH + (n+1) H(+)(in) = a plastoquinol + NADP(+) + n H(+)(out)</text>
        <dbReference type="Rhea" id="RHEA:42612"/>
        <dbReference type="Rhea" id="RHEA-COMP:9561"/>
        <dbReference type="Rhea" id="RHEA-COMP:9562"/>
        <dbReference type="ChEBI" id="CHEBI:15378"/>
        <dbReference type="ChEBI" id="CHEBI:17757"/>
        <dbReference type="ChEBI" id="CHEBI:57783"/>
        <dbReference type="ChEBI" id="CHEBI:58349"/>
        <dbReference type="ChEBI" id="CHEBI:62192"/>
    </reaction>
</comment>
<comment type="subunit">
    <text evidence="1">NDH is composed of at least 16 different subunits, 5 of which are encoded in the nucleus.</text>
</comment>
<comment type="subcellular location">
    <subcellularLocation>
        <location evidence="1">Plastid</location>
        <location evidence="1">Chloroplast thylakoid membrane</location>
        <topology evidence="1">Multi-pass membrane protein</topology>
    </subcellularLocation>
</comment>
<comment type="similarity">
    <text evidence="1">Belongs to the complex I subunit 3 family.</text>
</comment>
<protein>
    <recommendedName>
        <fullName evidence="1">NAD(P)H-quinone oxidoreductase subunit 3, chloroplastic</fullName>
        <ecNumber evidence="1">7.1.1.-</ecNumber>
    </recommendedName>
    <alternativeName>
        <fullName evidence="1">NAD(P)H dehydrogenase subunit 3</fullName>
    </alternativeName>
    <alternativeName>
        <fullName evidence="1">NADH-plastoquinone oxidoreductase subunit 3</fullName>
    </alternativeName>
</protein>
<feature type="chain" id="PRO_0000362848" description="NAD(P)H-quinone oxidoreductase subunit 3, chloroplastic">
    <location>
        <begin position="1"/>
        <end position="120"/>
    </location>
</feature>
<feature type="transmembrane region" description="Helical" evidence="1">
    <location>
        <begin position="9"/>
        <end position="29"/>
    </location>
</feature>
<feature type="transmembrane region" description="Helical" evidence="1">
    <location>
        <begin position="64"/>
        <end position="84"/>
    </location>
</feature>
<feature type="transmembrane region" description="Helical" evidence="1">
    <location>
        <begin position="88"/>
        <end position="108"/>
    </location>
</feature>
<keyword id="KW-0150">Chloroplast</keyword>
<keyword id="KW-0472">Membrane</keyword>
<keyword id="KW-0520">NAD</keyword>
<keyword id="KW-0521">NADP</keyword>
<keyword id="KW-0934">Plastid</keyword>
<keyword id="KW-0618">Plastoquinone</keyword>
<keyword id="KW-0874">Quinone</keyword>
<keyword id="KW-0793">Thylakoid</keyword>
<keyword id="KW-1278">Translocase</keyword>
<keyword id="KW-0812">Transmembrane</keyword>
<keyword id="KW-1133">Transmembrane helix</keyword>
<keyword id="KW-0813">Transport</keyword>
<proteinExistence type="inferred from homology"/>
<accession>A8Y9H5</accession>
<sequence length="120" mass="13832">MFLLHEYDIFWTFLIIASLIPILAFWISGLLAPVSEGPEKLSSYESGIEPMGGAWLQFRIRYYMFALVFVVFDVETVFLYPWAMSFDVLGVSVFIEAFIFVLILVVGLVYAWRKGALEWS</sequence>
<reference key="1">
    <citation type="journal article" date="2008" name="PLoS ONE">
        <title>An optimized chloroplast DNA extraction protocol for grasses (Poaceae) proves suitable for whole plastid genome sequencing and SNP detection.</title>
        <authorList>
            <person name="Diekmann K."/>
            <person name="Hodkinson T.R."/>
            <person name="Fricke E."/>
            <person name="Barth S."/>
        </authorList>
    </citation>
    <scope>NUCLEOTIDE SEQUENCE [LARGE SCALE GENOMIC DNA]</scope>
    <source>
        <strain>cv. Cashel</strain>
    </source>
</reference>
<organism>
    <name type="scientific">Lolium perenne</name>
    <name type="common">Perennial ryegrass</name>
    <dbReference type="NCBI Taxonomy" id="4522"/>
    <lineage>
        <taxon>Eukaryota</taxon>
        <taxon>Viridiplantae</taxon>
        <taxon>Streptophyta</taxon>
        <taxon>Embryophyta</taxon>
        <taxon>Tracheophyta</taxon>
        <taxon>Spermatophyta</taxon>
        <taxon>Magnoliopsida</taxon>
        <taxon>Liliopsida</taxon>
        <taxon>Poales</taxon>
        <taxon>Poaceae</taxon>
        <taxon>BOP clade</taxon>
        <taxon>Pooideae</taxon>
        <taxon>Poodae</taxon>
        <taxon>Poeae</taxon>
        <taxon>Poeae Chloroplast Group 2 (Poeae type)</taxon>
        <taxon>Loliodinae</taxon>
        <taxon>Loliinae</taxon>
        <taxon>Lolium</taxon>
    </lineage>
</organism>
<geneLocation type="chloroplast"/>
<evidence type="ECO:0000255" key="1">
    <source>
        <dbReference type="HAMAP-Rule" id="MF_01394"/>
    </source>
</evidence>
<dbReference type="EC" id="7.1.1.-" evidence="1"/>
<dbReference type="EMBL" id="AM777385">
    <property type="protein sequence ID" value="CAO85981.1"/>
    <property type="molecule type" value="Genomic_DNA"/>
</dbReference>
<dbReference type="RefSeq" id="YP_001531288.1">
    <property type="nucleotide sequence ID" value="NC_009950.1"/>
</dbReference>
<dbReference type="SMR" id="A8Y9H5"/>
<dbReference type="GeneID" id="5696610"/>
<dbReference type="KEGG" id="lper:5696610"/>
<dbReference type="GO" id="GO:0009535">
    <property type="term" value="C:chloroplast thylakoid membrane"/>
    <property type="evidence" value="ECO:0007669"/>
    <property type="project" value="UniProtKB-SubCell"/>
</dbReference>
<dbReference type="GO" id="GO:0030964">
    <property type="term" value="C:NADH dehydrogenase complex"/>
    <property type="evidence" value="ECO:0007669"/>
    <property type="project" value="TreeGrafter"/>
</dbReference>
<dbReference type="GO" id="GO:0008137">
    <property type="term" value="F:NADH dehydrogenase (ubiquinone) activity"/>
    <property type="evidence" value="ECO:0007669"/>
    <property type="project" value="InterPro"/>
</dbReference>
<dbReference type="GO" id="GO:0048038">
    <property type="term" value="F:quinone binding"/>
    <property type="evidence" value="ECO:0007669"/>
    <property type="project" value="UniProtKB-KW"/>
</dbReference>
<dbReference type="GO" id="GO:0019684">
    <property type="term" value="P:photosynthesis, light reaction"/>
    <property type="evidence" value="ECO:0007669"/>
    <property type="project" value="UniProtKB-UniRule"/>
</dbReference>
<dbReference type="FunFam" id="1.20.58.1610:FF:000001">
    <property type="entry name" value="NAD(P)H-quinone oxidoreductase subunit 3, chloroplastic"/>
    <property type="match status" value="1"/>
</dbReference>
<dbReference type="Gene3D" id="1.20.58.1610">
    <property type="entry name" value="NADH:ubiquinone/plastoquinone oxidoreductase, chain 3"/>
    <property type="match status" value="1"/>
</dbReference>
<dbReference type="HAMAP" id="MF_01394">
    <property type="entry name" value="NDH1_NuoA"/>
    <property type="match status" value="1"/>
</dbReference>
<dbReference type="InterPro" id="IPR023043">
    <property type="entry name" value="NAD(P)H_OxRDtase_bac/plastid"/>
</dbReference>
<dbReference type="InterPro" id="IPR000440">
    <property type="entry name" value="NADH_UbQ/plastoQ_OxRdtase_su3"/>
</dbReference>
<dbReference type="InterPro" id="IPR038430">
    <property type="entry name" value="NDAH_ubi_oxred_su3_sf"/>
</dbReference>
<dbReference type="PANTHER" id="PTHR11058">
    <property type="entry name" value="NADH-UBIQUINONE OXIDOREDUCTASE CHAIN 3"/>
    <property type="match status" value="1"/>
</dbReference>
<dbReference type="PANTHER" id="PTHR11058:SF9">
    <property type="entry name" value="NADH-UBIQUINONE OXIDOREDUCTASE CHAIN 3"/>
    <property type="match status" value="1"/>
</dbReference>
<dbReference type="Pfam" id="PF00507">
    <property type="entry name" value="Oxidored_q4"/>
    <property type="match status" value="1"/>
</dbReference>
<name>NU3C_LOLPR</name>